<reference key="1">
    <citation type="journal article" date="2007" name="PLoS ONE">
        <title>Paradoxical DNA repair and peroxide resistance gene conservation in Bacillus pumilus SAFR-032.</title>
        <authorList>
            <person name="Gioia J."/>
            <person name="Yerrapragada S."/>
            <person name="Qin X."/>
            <person name="Jiang H."/>
            <person name="Igboeli O.C."/>
            <person name="Muzny D."/>
            <person name="Dugan-Rocha S."/>
            <person name="Ding Y."/>
            <person name="Hawes A."/>
            <person name="Liu W."/>
            <person name="Perez L."/>
            <person name="Kovar C."/>
            <person name="Dinh H."/>
            <person name="Lee S."/>
            <person name="Nazareth L."/>
            <person name="Blyth P."/>
            <person name="Holder M."/>
            <person name="Buhay C."/>
            <person name="Tirumalai M.R."/>
            <person name="Liu Y."/>
            <person name="Dasgupta I."/>
            <person name="Bokhetache L."/>
            <person name="Fujita M."/>
            <person name="Karouia F."/>
            <person name="Eswara Moorthy P."/>
            <person name="Siefert J."/>
            <person name="Uzman A."/>
            <person name="Buzumbo P."/>
            <person name="Verma A."/>
            <person name="Zwiya H."/>
            <person name="McWilliams B.D."/>
            <person name="Olowu A."/>
            <person name="Clinkenbeard K.D."/>
            <person name="Newcombe D."/>
            <person name="Golebiewski L."/>
            <person name="Petrosino J.F."/>
            <person name="Nicholson W.L."/>
            <person name="Fox G.E."/>
            <person name="Venkateswaran K."/>
            <person name="Highlander S.K."/>
            <person name="Weinstock G.M."/>
        </authorList>
    </citation>
    <scope>NUCLEOTIDE SEQUENCE [LARGE SCALE GENOMIC DNA]</scope>
    <source>
        <strain>SAFR-032</strain>
    </source>
</reference>
<organism>
    <name type="scientific">Bacillus pumilus (strain SAFR-032)</name>
    <dbReference type="NCBI Taxonomy" id="315750"/>
    <lineage>
        <taxon>Bacteria</taxon>
        <taxon>Bacillati</taxon>
        <taxon>Bacillota</taxon>
        <taxon>Bacilli</taxon>
        <taxon>Bacillales</taxon>
        <taxon>Bacillaceae</taxon>
        <taxon>Bacillus</taxon>
    </lineage>
</organism>
<keyword id="KW-0012">Acyltransferase</keyword>
<keyword id="KW-0028">Amino-acid biosynthesis</keyword>
<keyword id="KW-0220">Diaminopimelate biosynthesis</keyword>
<keyword id="KW-0457">Lysine biosynthesis</keyword>
<keyword id="KW-0677">Repeat</keyword>
<keyword id="KW-0808">Transferase</keyword>
<name>DAPH_BACP2</name>
<feature type="chain" id="PRO_0000376638" description="2,3,4,5-tetrahydropyridine-2,6-dicarboxylate N-acetyltransferase">
    <location>
        <begin position="1"/>
        <end position="236"/>
    </location>
</feature>
<dbReference type="EC" id="2.3.1.89" evidence="1"/>
<dbReference type="EMBL" id="CP000813">
    <property type="protein sequence ID" value="ABV61998.1"/>
    <property type="molecule type" value="Genomic_DNA"/>
</dbReference>
<dbReference type="SMR" id="A8FCN1"/>
<dbReference type="STRING" id="315750.BPUM_1315"/>
<dbReference type="GeneID" id="5620578"/>
<dbReference type="KEGG" id="bpu:BPUM_1315"/>
<dbReference type="eggNOG" id="COG2171">
    <property type="taxonomic scope" value="Bacteria"/>
</dbReference>
<dbReference type="HOGENOM" id="CLU_103751_0_0_9"/>
<dbReference type="OrthoDB" id="9788080at2"/>
<dbReference type="UniPathway" id="UPA00034">
    <property type="reaction ID" value="UER00022"/>
</dbReference>
<dbReference type="Proteomes" id="UP000001355">
    <property type="component" value="Chromosome"/>
</dbReference>
<dbReference type="GO" id="GO:0047200">
    <property type="term" value="F:tetrahydrodipicolinate N-acetyltransferase activity"/>
    <property type="evidence" value="ECO:0007669"/>
    <property type="project" value="UniProtKB-EC"/>
</dbReference>
<dbReference type="GO" id="GO:0019877">
    <property type="term" value="P:diaminopimelate biosynthetic process"/>
    <property type="evidence" value="ECO:0007669"/>
    <property type="project" value="UniProtKB-UniRule"/>
</dbReference>
<dbReference type="GO" id="GO:0009089">
    <property type="term" value="P:lysine biosynthetic process via diaminopimelate"/>
    <property type="evidence" value="ECO:0007669"/>
    <property type="project" value="UniProtKB-UniRule"/>
</dbReference>
<dbReference type="CDD" id="cd03350">
    <property type="entry name" value="LbH_THP_succinylT"/>
    <property type="match status" value="1"/>
</dbReference>
<dbReference type="Gene3D" id="2.160.10.10">
    <property type="entry name" value="Hexapeptide repeat proteins"/>
    <property type="match status" value="1"/>
</dbReference>
<dbReference type="Gene3D" id="3.30.70.250">
    <property type="entry name" value="Malonyl-CoA ACP transacylase, ACP-binding"/>
    <property type="match status" value="1"/>
</dbReference>
<dbReference type="HAMAP" id="MF_01691">
    <property type="entry name" value="DapH"/>
    <property type="match status" value="1"/>
</dbReference>
<dbReference type="InterPro" id="IPR019873">
    <property type="entry name" value="DapH"/>
</dbReference>
<dbReference type="InterPro" id="IPR013710">
    <property type="entry name" value="DapH_N"/>
</dbReference>
<dbReference type="InterPro" id="IPR001451">
    <property type="entry name" value="Hexapep"/>
</dbReference>
<dbReference type="InterPro" id="IPR018357">
    <property type="entry name" value="Hexapep_transf_CS"/>
</dbReference>
<dbReference type="InterPro" id="IPR050179">
    <property type="entry name" value="Trans_hexapeptide_repeat"/>
</dbReference>
<dbReference type="InterPro" id="IPR011004">
    <property type="entry name" value="Trimer_LpxA-like_sf"/>
</dbReference>
<dbReference type="NCBIfam" id="TIGR03532">
    <property type="entry name" value="DapD_Ac"/>
    <property type="match status" value="1"/>
</dbReference>
<dbReference type="PANTHER" id="PTHR43300:SF10">
    <property type="entry name" value="2,3,4,5-TETRAHYDROPYRIDINE-2,6-DICARBOXYLATE N-ACETYLTRANSFERASE"/>
    <property type="match status" value="1"/>
</dbReference>
<dbReference type="PANTHER" id="PTHR43300">
    <property type="entry name" value="ACETYLTRANSFERASE"/>
    <property type="match status" value="1"/>
</dbReference>
<dbReference type="Pfam" id="PF08503">
    <property type="entry name" value="DapH_N"/>
    <property type="match status" value="1"/>
</dbReference>
<dbReference type="Pfam" id="PF00132">
    <property type="entry name" value="Hexapep"/>
    <property type="match status" value="1"/>
</dbReference>
<dbReference type="Pfam" id="PF14602">
    <property type="entry name" value="Hexapep_2"/>
    <property type="match status" value="1"/>
</dbReference>
<dbReference type="SUPFAM" id="SSF51161">
    <property type="entry name" value="Trimeric LpxA-like enzymes"/>
    <property type="match status" value="1"/>
</dbReference>
<dbReference type="PROSITE" id="PS00101">
    <property type="entry name" value="HEXAPEP_TRANSFERASES"/>
    <property type="match status" value="1"/>
</dbReference>
<protein>
    <recommendedName>
        <fullName evidence="1">2,3,4,5-tetrahydropyridine-2,6-dicarboxylate N-acetyltransferase</fullName>
        <ecNumber evidence="1">2.3.1.89</ecNumber>
    </recommendedName>
    <alternativeName>
        <fullName evidence="1">Tetrahydrodipicolinate N-acetyltransferase</fullName>
        <shortName evidence="1">THP acetyltransferase</shortName>
        <shortName evidence="1">Tetrahydropicolinate acetylase</shortName>
    </alternativeName>
</protein>
<gene>
    <name evidence="1" type="primary">dapH</name>
    <name type="ordered locus">BPUM_1315</name>
</gene>
<comment type="function">
    <text evidence="1">Catalyzes the transfer of an acetyl group from acetyl-CoA to tetrahydrodipicolinate.</text>
</comment>
<comment type="catalytic activity">
    <reaction evidence="1">
        <text>(S)-2,3,4,5-tetrahydrodipicolinate + acetyl-CoA + H2O = L-2-acetamido-6-oxoheptanedioate + CoA</text>
        <dbReference type="Rhea" id="RHEA:13085"/>
        <dbReference type="ChEBI" id="CHEBI:15377"/>
        <dbReference type="ChEBI" id="CHEBI:16845"/>
        <dbReference type="ChEBI" id="CHEBI:57287"/>
        <dbReference type="ChEBI" id="CHEBI:57288"/>
        <dbReference type="ChEBI" id="CHEBI:58117"/>
        <dbReference type="EC" id="2.3.1.89"/>
    </reaction>
</comment>
<comment type="pathway">
    <text evidence="1">Amino-acid biosynthesis; L-lysine biosynthesis via DAP pathway; LL-2,6-diaminopimelate from (S)-tetrahydrodipicolinate (acetylase route): step 1/3.</text>
</comment>
<comment type="similarity">
    <text evidence="1">Belongs to the transferase hexapeptide repeat family. DapH subfamily.</text>
</comment>
<sequence>MKQMDANEIISFIQNSTKSTPVKVYIKGDLEGIEFGEQAKTFITGNTGVVFGEWSDIQEALETNKDKIEDVVVENDRRNSAIPMLDLKNIKARIEPGAIIRDQVEIGDNAVIMMGASINIGSVIGEGTMIDMNVVLGGRATVGKNCHIGAGSVLAGVIEPPSAKPVVVEDDVVIGANAVVLEGVTIGKGAVVAAGAIVVNDVEPYTVVAGTPAKKIKDIDEKTKGKTEIKQELRQL</sequence>
<proteinExistence type="inferred from homology"/>
<evidence type="ECO:0000255" key="1">
    <source>
        <dbReference type="HAMAP-Rule" id="MF_01691"/>
    </source>
</evidence>
<accession>A8FCN1</accession>